<organism>
    <name type="scientific">Streptococcus pyogenes serotype M3 (strain ATCC BAA-595 / MGAS315)</name>
    <dbReference type="NCBI Taxonomy" id="198466"/>
    <lineage>
        <taxon>Bacteria</taxon>
        <taxon>Bacillati</taxon>
        <taxon>Bacillota</taxon>
        <taxon>Bacilli</taxon>
        <taxon>Lactobacillales</taxon>
        <taxon>Streptococcaceae</taxon>
        <taxon>Streptococcus</taxon>
    </lineage>
</organism>
<accession>P0DC30</accession>
<accession>Q879M2</accession>
<accession>Q8K8M5</accession>
<sequence>MEMKQISETTLKITISMDDLEERGMELKDFLIPQEKTEEFFYSVMDELDLPDNFKDSGMLSFRVTPRKDRLDVFVTKSEINKDINLEDLAEFGDMSQMTPEDFFKSLEQSMREKGDVKAHEKLEQIEEIMEDVVEATLANQSEAADPSTNHESEPLDYVHYVLDFSTITEAVAFAKTIDFSIEASELYKGSNCYHMTILLDVQQQPSYFANVMYARLIEHANPGSKTRAYLQEHGLQLMLDGAVEQLQKIELG</sequence>
<name>MECA_STRP3</name>
<reference key="1">
    <citation type="journal article" date="2002" name="Proc. Natl. Acad. Sci. U.S.A.">
        <title>Genome sequence of a serotype M3 strain of group A Streptococcus: phage-encoded toxins, the high-virulence phenotype, and clone emergence.</title>
        <authorList>
            <person name="Beres S.B."/>
            <person name="Sylva G.L."/>
            <person name="Barbian K.D."/>
            <person name="Lei B."/>
            <person name="Hoff J.S."/>
            <person name="Mammarella N.D."/>
            <person name="Liu M.-Y."/>
            <person name="Smoot J.C."/>
            <person name="Porcella S.F."/>
            <person name="Parkins L.D."/>
            <person name="Campbell D.S."/>
            <person name="Smith T.M."/>
            <person name="McCormick J.K."/>
            <person name="Leung D.Y.M."/>
            <person name="Schlievert P.M."/>
            <person name="Musser J.M."/>
        </authorList>
    </citation>
    <scope>NUCLEOTIDE SEQUENCE [LARGE SCALE GENOMIC DNA]</scope>
    <source>
        <strain>ATCC BAA-595 / MGAS315</strain>
    </source>
</reference>
<evidence type="ECO:0000255" key="1">
    <source>
        <dbReference type="HAMAP-Rule" id="MF_01124"/>
    </source>
</evidence>
<evidence type="ECO:0000305" key="2"/>
<feature type="chain" id="PRO_0000212292" description="Adapter protein MecA">
    <location>
        <begin position="1"/>
        <end position="253"/>
    </location>
</feature>
<dbReference type="EMBL" id="AE014074">
    <property type="protein sequence ID" value="AAM78813.1"/>
    <property type="status" value="ALT_INIT"/>
    <property type="molecule type" value="Genomic_DNA"/>
</dbReference>
<dbReference type="RefSeq" id="WP_011106593.1">
    <property type="nucleotide sequence ID" value="NC_004070.1"/>
</dbReference>
<dbReference type="SMR" id="P0DC30"/>
<dbReference type="KEGG" id="spg:SpyM3_0206"/>
<dbReference type="HOGENOM" id="CLU_071496_1_0_9"/>
<dbReference type="Proteomes" id="UP000000564">
    <property type="component" value="Chromosome"/>
</dbReference>
<dbReference type="GO" id="GO:0030674">
    <property type="term" value="F:protein-macromolecule adaptor activity"/>
    <property type="evidence" value="ECO:0007669"/>
    <property type="project" value="UniProtKB-UniRule"/>
</dbReference>
<dbReference type="Gene3D" id="3.30.70.1950">
    <property type="match status" value="1"/>
</dbReference>
<dbReference type="HAMAP" id="MF_01124">
    <property type="entry name" value="MecA"/>
    <property type="match status" value="1"/>
</dbReference>
<dbReference type="InterPro" id="IPR038471">
    <property type="entry name" value="MecA_C_sf"/>
</dbReference>
<dbReference type="InterPro" id="IPR008681">
    <property type="entry name" value="Neg-reg_MecA"/>
</dbReference>
<dbReference type="NCBIfam" id="NF002643">
    <property type="entry name" value="PRK02315.1-4"/>
    <property type="match status" value="1"/>
</dbReference>
<dbReference type="PANTHER" id="PTHR39161">
    <property type="entry name" value="ADAPTER PROTEIN MECA"/>
    <property type="match status" value="1"/>
</dbReference>
<dbReference type="PANTHER" id="PTHR39161:SF1">
    <property type="entry name" value="ADAPTER PROTEIN MECA 1"/>
    <property type="match status" value="1"/>
</dbReference>
<dbReference type="Pfam" id="PF05389">
    <property type="entry name" value="MecA"/>
    <property type="match status" value="1"/>
</dbReference>
<dbReference type="PIRSF" id="PIRSF029008">
    <property type="entry name" value="MecA"/>
    <property type="match status" value="1"/>
</dbReference>
<proteinExistence type="inferred from homology"/>
<comment type="function">
    <text evidence="1">Enables the recognition and targeting of unfolded and aggregated proteins to the ClpC protease or to other proteins involved in proteolysis.</text>
</comment>
<comment type="subunit">
    <text evidence="1">Homodimer.</text>
</comment>
<comment type="domain">
    <text>The N-terminal domain probably binds unfolded/aggregated proteins; the C-terminal domain interacts with ClpC.</text>
</comment>
<comment type="similarity">
    <text evidence="1">Belongs to the MecA family.</text>
</comment>
<comment type="sequence caution" evidence="2">
    <conflict type="erroneous initiation">
        <sequence resource="EMBL-CDS" id="AAM78813"/>
    </conflict>
</comment>
<protein>
    <recommendedName>
        <fullName evidence="1">Adapter protein MecA</fullName>
    </recommendedName>
</protein>
<gene>
    <name evidence="1" type="primary">mecA</name>
    <name type="ordered locus">SpyM3_0206</name>
</gene>